<feature type="chain" id="PRO_0000168233" description="Dihydropteroate synthase">
    <location>
        <begin position="1"/>
        <end position="266"/>
    </location>
</feature>
<feature type="domain" description="Pterin-binding" evidence="4">
    <location>
        <begin position="12"/>
        <end position="260"/>
    </location>
</feature>
<feature type="binding site" evidence="3">
    <location>
        <position position="19"/>
    </location>
    <ligand>
        <name>Mg(2+)</name>
        <dbReference type="ChEBI" id="CHEBI:18420"/>
    </ligand>
</feature>
<feature type="binding site" evidence="2">
    <location>
        <position position="59"/>
    </location>
    <ligand>
        <name>(7,8-dihydropterin-6-yl)methyl diphosphate</name>
        <dbReference type="ChEBI" id="CHEBI:72950"/>
    </ligand>
</feature>
<feature type="binding site" evidence="2">
    <location>
        <position position="93"/>
    </location>
    <ligand>
        <name>(7,8-dihydropterin-6-yl)methyl diphosphate</name>
        <dbReference type="ChEBI" id="CHEBI:72950"/>
    </ligand>
</feature>
<feature type="binding site" evidence="2">
    <location>
        <position position="112"/>
    </location>
    <ligand>
        <name>(7,8-dihydropterin-6-yl)methyl diphosphate</name>
        <dbReference type="ChEBI" id="CHEBI:72950"/>
    </ligand>
</feature>
<feature type="binding site" evidence="2">
    <location>
        <position position="176"/>
    </location>
    <ligand>
        <name>(7,8-dihydropterin-6-yl)methyl diphosphate</name>
        <dbReference type="ChEBI" id="CHEBI:72950"/>
    </ligand>
</feature>
<feature type="binding site" evidence="2">
    <location>
        <position position="212"/>
    </location>
    <ligand>
        <name>(7,8-dihydropterin-6-yl)methyl diphosphate</name>
        <dbReference type="ChEBI" id="CHEBI:72950"/>
    </ligand>
</feature>
<feature type="binding site" evidence="2">
    <location>
        <begin position="248"/>
        <end position="250"/>
    </location>
    <ligand>
        <name>(7,8-dihydropterin-6-yl)methyl diphosphate</name>
        <dbReference type="ChEBI" id="CHEBI:72950"/>
    </ligand>
</feature>
<reference key="1">
    <citation type="journal article" date="2001" name="Proc. Natl. Acad. Sci. U.S.A.">
        <title>Complete genome sequence of an M1 strain of Streptococcus pyogenes.</title>
        <authorList>
            <person name="Ferretti J.J."/>
            <person name="McShan W.M."/>
            <person name="Ajdic D.J."/>
            <person name="Savic D.J."/>
            <person name="Savic G."/>
            <person name="Lyon K."/>
            <person name="Primeaux C."/>
            <person name="Sezate S."/>
            <person name="Suvorov A.N."/>
            <person name="Kenton S."/>
            <person name="Lai H.S."/>
            <person name="Lin S.P."/>
            <person name="Qian Y."/>
            <person name="Jia H.G."/>
            <person name="Najar F.Z."/>
            <person name="Ren Q."/>
            <person name="Zhu H."/>
            <person name="Song L."/>
            <person name="White J."/>
            <person name="Yuan X."/>
            <person name="Clifton S.W."/>
            <person name="Roe B.A."/>
            <person name="McLaughlin R.E."/>
        </authorList>
    </citation>
    <scope>NUCLEOTIDE SEQUENCE [LARGE SCALE GENOMIC DNA]</scope>
    <source>
        <strain>ATCC 700294 / SF370 / Serotype M1</strain>
    </source>
</reference>
<reference key="2">
    <citation type="journal article" date="2005" name="J. Infect. Dis.">
        <title>Evolutionary origin and emergence of a highly successful clone of serotype M1 group A Streptococcus involved multiple horizontal gene transfer events.</title>
        <authorList>
            <person name="Sumby P."/>
            <person name="Porcella S.F."/>
            <person name="Madrigal A.G."/>
            <person name="Barbian K.D."/>
            <person name="Virtaneva K."/>
            <person name="Ricklefs S.M."/>
            <person name="Sturdevant D.E."/>
            <person name="Graham M.R."/>
            <person name="Vuopio-Varkila J."/>
            <person name="Hoe N.P."/>
            <person name="Musser J.M."/>
        </authorList>
    </citation>
    <scope>NUCLEOTIDE SEQUENCE [LARGE SCALE GENOMIC DNA]</scope>
    <source>
        <strain>ATCC BAA-947 / MGAS5005 / Serotype M1</strain>
    </source>
</reference>
<protein>
    <recommendedName>
        <fullName>Dihydropteroate synthase</fullName>
        <shortName>DHPS</shortName>
        <ecNumber>2.5.1.15</ecNumber>
    </recommendedName>
    <alternativeName>
        <fullName>Dihydropteroate pyrophosphorylase</fullName>
    </alternativeName>
</protein>
<proteinExistence type="inferred from homology"/>
<organism>
    <name type="scientific">Streptococcus pyogenes serotype M1</name>
    <dbReference type="NCBI Taxonomy" id="301447"/>
    <lineage>
        <taxon>Bacteria</taxon>
        <taxon>Bacillati</taxon>
        <taxon>Bacillota</taxon>
        <taxon>Bacilli</taxon>
        <taxon>Lactobacillales</taxon>
        <taxon>Streptococcaceae</taxon>
        <taxon>Streptococcus</taxon>
    </lineage>
</organism>
<evidence type="ECO:0000250" key="1"/>
<evidence type="ECO:0000250" key="2">
    <source>
        <dbReference type="UniProtKB" id="P0AC13"/>
    </source>
</evidence>
<evidence type="ECO:0000250" key="3">
    <source>
        <dbReference type="UniProtKB" id="P9WND1"/>
    </source>
</evidence>
<evidence type="ECO:0000255" key="4">
    <source>
        <dbReference type="PROSITE-ProRule" id="PRU00334"/>
    </source>
</evidence>
<evidence type="ECO:0000305" key="5"/>
<comment type="function">
    <text evidence="2">Catalyzes the condensation of para-aminobenzoate (pABA) with 6-hydroxymethyl-7,8-dihydropterin diphosphate (DHPt-PP) to form 7,8-dihydropteroate (H2Pte), the immediate precursor of folate derivatives.</text>
</comment>
<comment type="catalytic activity">
    <reaction evidence="2">
        <text>(7,8-dihydropterin-6-yl)methyl diphosphate + 4-aminobenzoate = 7,8-dihydropteroate + diphosphate</text>
        <dbReference type="Rhea" id="RHEA:19949"/>
        <dbReference type="ChEBI" id="CHEBI:17836"/>
        <dbReference type="ChEBI" id="CHEBI:17839"/>
        <dbReference type="ChEBI" id="CHEBI:33019"/>
        <dbReference type="ChEBI" id="CHEBI:72950"/>
        <dbReference type="EC" id="2.5.1.15"/>
    </reaction>
</comment>
<comment type="cofactor">
    <cofactor evidence="2">
        <name>Mg(2+)</name>
        <dbReference type="ChEBI" id="CHEBI:18420"/>
    </cofactor>
</comment>
<comment type="pathway">
    <text>Cofactor biosynthesis; tetrahydrofolate biosynthesis; 7,8-dihydrofolate from 2-amino-4-hydroxy-6-hydroxymethyl-7,8-dihydropteridine diphosphate and 4-aminobenzoate: step 1/2.</text>
</comment>
<comment type="subunit">
    <text evidence="1">Homodimer or homotrimer.</text>
</comment>
<comment type="similarity">
    <text evidence="5">Belongs to the DHPS family.</text>
</comment>
<sequence>MKIGKFVIEGNAAIMGILNVTPDSFSDGGSYTTVQKALDHVEQMIADGAKIIDVGGESTRPGCQFVSATDEIDRVVPVIKAIKENYDILISIDTYKTETARAALEAGADILNDVWAGLYDGQMFALAAEYDAPIILMHNQDEEVYQEVTQDVCDFLGNRAQAALDAGVPKNNIWVDPGFGFAKSVQQNTELLKGLDRVCQLGYPVLFGISRKRVVDALLGGNTKAKERDGATAALSAYALGKGCQIVRVHDVKANQDIVAVLSQLM</sequence>
<keyword id="KW-0289">Folate biosynthesis</keyword>
<keyword id="KW-0460">Magnesium</keyword>
<keyword id="KW-0479">Metal-binding</keyword>
<keyword id="KW-1185">Reference proteome</keyword>
<keyword id="KW-0808">Transferase</keyword>
<dbReference type="EC" id="2.5.1.15"/>
<dbReference type="EMBL" id="AE004092">
    <property type="protein sequence ID" value="AAK33976.1"/>
    <property type="molecule type" value="Genomic_DNA"/>
</dbReference>
<dbReference type="EMBL" id="CP000017">
    <property type="protein sequence ID" value="AAZ51440.1"/>
    <property type="molecule type" value="Genomic_DNA"/>
</dbReference>
<dbReference type="RefSeq" id="NP_269255.1">
    <property type="nucleotide sequence ID" value="NC_002737.2"/>
</dbReference>
<dbReference type="SMR" id="P0C0G1"/>
<dbReference type="PaxDb" id="1314-HKU360_00887"/>
<dbReference type="KEGG" id="spy:SPy_1098"/>
<dbReference type="KEGG" id="spz:M5005_Spy0822"/>
<dbReference type="PATRIC" id="fig|160490.10.peg.954"/>
<dbReference type="HOGENOM" id="CLU_008023_0_2_9"/>
<dbReference type="OMA" id="FATPRDC"/>
<dbReference type="SABIO-RK" id="P0C0G1"/>
<dbReference type="UniPathway" id="UPA00077">
    <property type="reaction ID" value="UER00156"/>
</dbReference>
<dbReference type="Proteomes" id="UP000000750">
    <property type="component" value="Chromosome"/>
</dbReference>
<dbReference type="GO" id="GO:0005829">
    <property type="term" value="C:cytosol"/>
    <property type="evidence" value="ECO:0007669"/>
    <property type="project" value="TreeGrafter"/>
</dbReference>
<dbReference type="GO" id="GO:0004156">
    <property type="term" value="F:dihydropteroate synthase activity"/>
    <property type="evidence" value="ECO:0007669"/>
    <property type="project" value="UniProtKB-EC"/>
</dbReference>
<dbReference type="GO" id="GO:0046872">
    <property type="term" value="F:metal ion binding"/>
    <property type="evidence" value="ECO:0007669"/>
    <property type="project" value="UniProtKB-KW"/>
</dbReference>
<dbReference type="GO" id="GO:0046656">
    <property type="term" value="P:folic acid biosynthetic process"/>
    <property type="evidence" value="ECO:0007669"/>
    <property type="project" value="UniProtKB-KW"/>
</dbReference>
<dbReference type="GO" id="GO:0046654">
    <property type="term" value="P:tetrahydrofolate biosynthetic process"/>
    <property type="evidence" value="ECO:0007669"/>
    <property type="project" value="UniProtKB-UniPathway"/>
</dbReference>
<dbReference type="CDD" id="cd00739">
    <property type="entry name" value="DHPS"/>
    <property type="match status" value="1"/>
</dbReference>
<dbReference type="FunFam" id="3.20.20.20:FF:000006">
    <property type="entry name" value="Dihydropteroate synthase"/>
    <property type="match status" value="1"/>
</dbReference>
<dbReference type="Gene3D" id="3.20.20.20">
    <property type="entry name" value="Dihydropteroate synthase-like"/>
    <property type="match status" value="1"/>
</dbReference>
<dbReference type="InterPro" id="IPR045031">
    <property type="entry name" value="DHP_synth-like"/>
</dbReference>
<dbReference type="InterPro" id="IPR006390">
    <property type="entry name" value="DHP_synth_dom"/>
</dbReference>
<dbReference type="InterPro" id="IPR011005">
    <property type="entry name" value="Dihydropteroate_synth-like_sf"/>
</dbReference>
<dbReference type="InterPro" id="IPR000489">
    <property type="entry name" value="Pterin-binding_dom"/>
</dbReference>
<dbReference type="NCBIfam" id="TIGR01496">
    <property type="entry name" value="DHPS"/>
    <property type="match status" value="1"/>
</dbReference>
<dbReference type="PANTHER" id="PTHR20941">
    <property type="entry name" value="FOLATE SYNTHESIS PROTEINS"/>
    <property type="match status" value="1"/>
</dbReference>
<dbReference type="PANTHER" id="PTHR20941:SF1">
    <property type="entry name" value="FOLIC ACID SYNTHESIS PROTEIN FOL1"/>
    <property type="match status" value="1"/>
</dbReference>
<dbReference type="Pfam" id="PF00809">
    <property type="entry name" value="Pterin_bind"/>
    <property type="match status" value="1"/>
</dbReference>
<dbReference type="SUPFAM" id="SSF51717">
    <property type="entry name" value="Dihydropteroate synthetase-like"/>
    <property type="match status" value="1"/>
</dbReference>
<dbReference type="PROSITE" id="PS00792">
    <property type="entry name" value="DHPS_1"/>
    <property type="match status" value="1"/>
</dbReference>
<dbReference type="PROSITE" id="PS00793">
    <property type="entry name" value="DHPS_2"/>
    <property type="match status" value="1"/>
</dbReference>
<dbReference type="PROSITE" id="PS50972">
    <property type="entry name" value="PTERIN_BINDING"/>
    <property type="match status" value="1"/>
</dbReference>
<gene>
    <name type="primary">folP</name>
    <name type="ordered locus">SPy_1098</name>
    <name type="ordered locus">M5005_Spy0822</name>
</gene>
<name>DHPS_STRP1</name>
<accession>P0C0G1</accession>
<accession>O33724</accession>
<accession>Q48YY2</accession>